<reference key="1">
    <citation type="journal article" date="2002" name="J. Bacteriol.">
        <title>Whole-genome comparison of Mycobacterium tuberculosis clinical and laboratory strains.</title>
        <authorList>
            <person name="Fleischmann R.D."/>
            <person name="Alland D."/>
            <person name="Eisen J.A."/>
            <person name="Carpenter L."/>
            <person name="White O."/>
            <person name="Peterson J.D."/>
            <person name="DeBoy R.T."/>
            <person name="Dodson R.J."/>
            <person name="Gwinn M.L."/>
            <person name="Haft D.H."/>
            <person name="Hickey E.K."/>
            <person name="Kolonay J.F."/>
            <person name="Nelson W.C."/>
            <person name="Umayam L.A."/>
            <person name="Ermolaeva M.D."/>
            <person name="Salzberg S.L."/>
            <person name="Delcher A."/>
            <person name="Utterback T.R."/>
            <person name="Weidman J.F."/>
            <person name="Khouri H.M."/>
            <person name="Gill J."/>
            <person name="Mikula A."/>
            <person name="Bishai W."/>
            <person name="Jacobs W.R. Jr."/>
            <person name="Venter J.C."/>
            <person name="Fraser C.M."/>
        </authorList>
    </citation>
    <scope>NUCLEOTIDE SEQUENCE [LARGE SCALE GENOMIC DNA]</scope>
    <source>
        <strain>CDC 1551 / Oshkosh</strain>
    </source>
</reference>
<protein>
    <recommendedName>
        <fullName>Uncharacterized protein MT2057</fullName>
    </recommendedName>
</protein>
<sequence length="250" mass="28734">MHHNRDVDLALVERPSSGYVYTTGWRLATTDIDEHQQLRLDGVARYIQEVGAEHLADAQLAEVHPHWIVLRTVIDVINPIELPSDITFHRWCAALSTRWCSMRVQLQGSAGGRIETEGFWICVNKDTLTPSRLTDDCIARFGSTTENHRLKWRPWLTGPNIDGTETPFPLRRTDIDPFEHVNNTIYWHGVHEILCQIPTLTAPYRAVLEYRSPIKSGEPLTIRYEQHDDVVRMHFVVGDDVRAAALLRRL</sequence>
<organism>
    <name type="scientific">Mycobacterium tuberculosis (strain CDC 1551 / Oshkosh)</name>
    <dbReference type="NCBI Taxonomy" id="83331"/>
    <lineage>
        <taxon>Bacteria</taxon>
        <taxon>Bacillati</taxon>
        <taxon>Actinomycetota</taxon>
        <taxon>Actinomycetes</taxon>
        <taxon>Mycobacteriales</taxon>
        <taxon>Mycobacteriaceae</taxon>
        <taxon>Mycobacterium</taxon>
        <taxon>Mycobacterium tuberculosis complex</taxon>
    </lineage>
</organism>
<name>Y2001_MYCTO</name>
<proteinExistence type="predicted"/>
<dbReference type="EMBL" id="AE000516">
    <property type="protein sequence ID" value="AAK46334.1"/>
    <property type="molecule type" value="Genomic_DNA"/>
</dbReference>
<dbReference type="PIR" id="G70758">
    <property type="entry name" value="G70758"/>
</dbReference>
<dbReference type="RefSeq" id="WP_003900448.1">
    <property type="nucleotide sequence ID" value="NZ_KK341227.1"/>
</dbReference>
<dbReference type="SMR" id="P9WLN4"/>
<dbReference type="KEGG" id="mtc:MT2057"/>
<dbReference type="PATRIC" id="fig|83331.31.peg.2214"/>
<dbReference type="HOGENOM" id="CLU_082975_0_0_11"/>
<dbReference type="Proteomes" id="UP000001020">
    <property type="component" value="Chromosome"/>
</dbReference>
<dbReference type="GO" id="GO:0047617">
    <property type="term" value="F:fatty acyl-CoA hydrolase activity"/>
    <property type="evidence" value="ECO:0007669"/>
    <property type="project" value="TreeGrafter"/>
</dbReference>
<dbReference type="GO" id="GO:0006633">
    <property type="term" value="P:fatty acid biosynthetic process"/>
    <property type="evidence" value="ECO:0007669"/>
    <property type="project" value="InterPro"/>
</dbReference>
<dbReference type="Gene3D" id="3.10.129.10">
    <property type="entry name" value="Hotdog Thioesterase"/>
    <property type="match status" value="1"/>
</dbReference>
<dbReference type="InterPro" id="IPR050563">
    <property type="entry name" value="4-hydroxybenzoyl-CoA_TE"/>
</dbReference>
<dbReference type="InterPro" id="IPR049427">
    <property type="entry name" value="Acyl-ACP_TE_C"/>
</dbReference>
<dbReference type="InterPro" id="IPR002864">
    <property type="entry name" value="Acyl-ACP_thioesterase_NHD"/>
</dbReference>
<dbReference type="InterPro" id="IPR029069">
    <property type="entry name" value="HotDog_dom_sf"/>
</dbReference>
<dbReference type="PANTHER" id="PTHR31793">
    <property type="entry name" value="4-HYDROXYBENZOYL-COA THIOESTERASE FAMILY MEMBER"/>
    <property type="match status" value="1"/>
</dbReference>
<dbReference type="PANTHER" id="PTHR31793:SF24">
    <property type="entry name" value="LONG-CHAIN ACYL-COA THIOESTERASE FADM"/>
    <property type="match status" value="1"/>
</dbReference>
<dbReference type="Pfam" id="PF01643">
    <property type="entry name" value="Acyl-ACP_TE"/>
    <property type="match status" value="1"/>
</dbReference>
<dbReference type="Pfam" id="PF20791">
    <property type="entry name" value="Acyl-ACP_TE_C"/>
    <property type="match status" value="1"/>
</dbReference>
<dbReference type="SUPFAM" id="SSF54637">
    <property type="entry name" value="Thioesterase/thiol ester dehydrase-isomerase"/>
    <property type="match status" value="2"/>
</dbReference>
<gene>
    <name type="ordered locus">MT2057</name>
</gene>
<feature type="chain" id="PRO_0000427448" description="Uncharacterized protein MT2057">
    <location>
        <begin position="1"/>
        <end position="250"/>
    </location>
</feature>
<keyword id="KW-1185">Reference proteome</keyword>
<accession>P9WLN4</accession>
<accession>L0T8H6</accession>
<accession>Q10856</accession>